<evidence type="ECO:0000255" key="1">
    <source>
        <dbReference type="HAMAP-Rule" id="MF_01309"/>
    </source>
</evidence>
<evidence type="ECO:0000256" key="2">
    <source>
        <dbReference type="SAM" id="MobiDB-lite"/>
    </source>
</evidence>
<evidence type="ECO:0000305" key="3"/>
<sequence>MGQKVNPIGLRLGINRTWDSRWFAGKNEYGKLLHEDMAIRAALMKTLKQAAVSKIIIERPHKKCRVTIHSARPGVVIGKKGADIDKIRKLVAKMTDSEVLINIVEVRKPEIDATLVADSIAQQLERRVAFRRAMKRAVQSAMRLGAEGIRINCSGRLGGAEIARLEWYREGRVPLHTLRADVDYGTATAHTAYGACGIKVWIFKGEILEHDPMAQDKKMAEQDHGGGGGDRRRRDRDAA</sequence>
<organism>
    <name type="scientific">Methylocella silvestris (strain DSM 15510 / CIP 108128 / LMG 27833 / NCIMB 13906 / BL2)</name>
    <dbReference type="NCBI Taxonomy" id="395965"/>
    <lineage>
        <taxon>Bacteria</taxon>
        <taxon>Pseudomonadati</taxon>
        <taxon>Pseudomonadota</taxon>
        <taxon>Alphaproteobacteria</taxon>
        <taxon>Hyphomicrobiales</taxon>
        <taxon>Beijerinckiaceae</taxon>
        <taxon>Methylocella</taxon>
    </lineage>
</organism>
<protein>
    <recommendedName>
        <fullName evidence="1">Small ribosomal subunit protein uS3</fullName>
    </recommendedName>
    <alternativeName>
        <fullName evidence="3">30S ribosomal protein S3</fullName>
    </alternativeName>
</protein>
<keyword id="KW-1185">Reference proteome</keyword>
<keyword id="KW-0687">Ribonucleoprotein</keyword>
<keyword id="KW-0689">Ribosomal protein</keyword>
<keyword id="KW-0694">RNA-binding</keyword>
<keyword id="KW-0699">rRNA-binding</keyword>
<name>RS3_METSB</name>
<dbReference type="EMBL" id="CP001280">
    <property type="protein sequence ID" value="ACK49546.1"/>
    <property type="molecule type" value="Genomic_DNA"/>
</dbReference>
<dbReference type="RefSeq" id="WP_012589616.1">
    <property type="nucleotide sequence ID" value="NC_011666.1"/>
</dbReference>
<dbReference type="SMR" id="B8ELF7"/>
<dbReference type="STRING" id="395965.Msil_0574"/>
<dbReference type="KEGG" id="msl:Msil_0574"/>
<dbReference type="eggNOG" id="COG0092">
    <property type="taxonomic scope" value="Bacteria"/>
</dbReference>
<dbReference type="HOGENOM" id="CLU_058591_0_2_5"/>
<dbReference type="OrthoDB" id="9806396at2"/>
<dbReference type="Proteomes" id="UP000002257">
    <property type="component" value="Chromosome"/>
</dbReference>
<dbReference type="GO" id="GO:0022627">
    <property type="term" value="C:cytosolic small ribosomal subunit"/>
    <property type="evidence" value="ECO:0007669"/>
    <property type="project" value="TreeGrafter"/>
</dbReference>
<dbReference type="GO" id="GO:0003729">
    <property type="term" value="F:mRNA binding"/>
    <property type="evidence" value="ECO:0007669"/>
    <property type="project" value="UniProtKB-UniRule"/>
</dbReference>
<dbReference type="GO" id="GO:0019843">
    <property type="term" value="F:rRNA binding"/>
    <property type="evidence" value="ECO:0007669"/>
    <property type="project" value="UniProtKB-UniRule"/>
</dbReference>
<dbReference type="GO" id="GO:0003735">
    <property type="term" value="F:structural constituent of ribosome"/>
    <property type="evidence" value="ECO:0007669"/>
    <property type="project" value="InterPro"/>
</dbReference>
<dbReference type="GO" id="GO:0006412">
    <property type="term" value="P:translation"/>
    <property type="evidence" value="ECO:0007669"/>
    <property type="project" value="UniProtKB-UniRule"/>
</dbReference>
<dbReference type="CDD" id="cd02412">
    <property type="entry name" value="KH-II_30S_S3"/>
    <property type="match status" value="1"/>
</dbReference>
<dbReference type="FunFam" id="3.30.1140.32:FF:000001">
    <property type="entry name" value="30S ribosomal protein S3"/>
    <property type="match status" value="1"/>
</dbReference>
<dbReference type="FunFam" id="3.30.300.20:FF:000001">
    <property type="entry name" value="30S ribosomal protein S3"/>
    <property type="match status" value="1"/>
</dbReference>
<dbReference type="Gene3D" id="3.30.300.20">
    <property type="match status" value="1"/>
</dbReference>
<dbReference type="Gene3D" id="3.30.1140.32">
    <property type="entry name" value="Ribosomal protein S3, C-terminal domain"/>
    <property type="match status" value="1"/>
</dbReference>
<dbReference type="HAMAP" id="MF_01309_B">
    <property type="entry name" value="Ribosomal_uS3_B"/>
    <property type="match status" value="1"/>
</dbReference>
<dbReference type="InterPro" id="IPR004087">
    <property type="entry name" value="KH_dom"/>
</dbReference>
<dbReference type="InterPro" id="IPR015946">
    <property type="entry name" value="KH_dom-like_a/b"/>
</dbReference>
<dbReference type="InterPro" id="IPR004044">
    <property type="entry name" value="KH_dom_type_2"/>
</dbReference>
<dbReference type="InterPro" id="IPR009019">
    <property type="entry name" value="KH_sf_prok-type"/>
</dbReference>
<dbReference type="InterPro" id="IPR036419">
    <property type="entry name" value="Ribosomal_S3_C_sf"/>
</dbReference>
<dbReference type="InterPro" id="IPR005704">
    <property type="entry name" value="Ribosomal_uS3_bac-typ"/>
</dbReference>
<dbReference type="InterPro" id="IPR001351">
    <property type="entry name" value="Ribosomal_uS3_C"/>
</dbReference>
<dbReference type="InterPro" id="IPR018280">
    <property type="entry name" value="Ribosomal_uS3_CS"/>
</dbReference>
<dbReference type="NCBIfam" id="TIGR01009">
    <property type="entry name" value="rpsC_bact"/>
    <property type="match status" value="1"/>
</dbReference>
<dbReference type="PANTHER" id="PTHR11760">
    <property type="entry name" value="30S/40S RIBOSOMAL PROTEIN S3"/>
    <property type="match status" value="1"/>
</dbReference>
<dbReference type="PANTHER" id="PTHR11760:SF19">
    <property type="entry name" value="SMALL RIBOSOMAL SUBUNIT PROTEIN US3C"/>
    <property type="match status" value="1"/>
</dbReference>
<dbReference type="Pfam" id="PF07650">
    <property type="entry name" value="KH_2"/>
    <property type="match status" value="1"/>
</dbReference>
<dbReference type="Pfam" id="PF00189">
    <property type="entry name" value="Ribosomal_S3_C"/>
    <property type="match status" value="1"/>
</dbReference>
<dbReference type="SMART" id="SM00322">
    <property type="entry name" value="KH"/>
    <property type="match status" value="1"/>
</dbReference>
<dbReference type="SUPFAM" id="SSF54814">
    <property type="entry name" value="Prokaryotic type KH domain (KH-domain type II)"/>
    <property type="match status" value="1"/>
</dbReference>
<dbReference type="SUPFAM" id="SSF54821">
    <property type="entry name" value="Ribosomal protein S3 C-terminal domain"/>
    <property type="match status" value="1"/>
</dbReference>
<dbReference type="PROSITE" id="PS50823">
    <property type="entry name" value="KH_TYPE_2"/>
    <property type="match status" value="1"/>
</dbReference>
<dbReference type="PROSITE" id="PS00548">
    <property type="entry name" value="RIBOSOMAL_S3"/>
    <property type="match status" value="1"/>
</dbReference>
<proteinExistence type="inferred from homology"/>
<feature type="chain" id="PRO_1000165500" description="Small ribosomal subunit protein uS3">
    <location>
        <begin position="1"/>
        <end position="239"/>
    </location>
</feature>
<feature type="domain" description="KH type-2" evidence="1">
    <location>
        <begin position="39"/>
        <end position="107"/>
    </location>
</feature>
<feature type="region of interest" description="Disordered" evidence="2">
    <location>
        <begin position="214"/>
        <end position="239"/>
    </location>
</feature>
<accession>B8ELF7</accession>
<comment type="function">
    <text evidence="1">Binds the lower part of the 30S subunit head. Binds mRNA in the 70S ribosome, positioning it for translation.</text>
</comment>
<comment type="subunit">
    <text evidence="1">Part of the 30S ribosomal subunit. Forms a tight complex with proteins S10 and S14.</text>
</comment>
<comment type="similarity">
    <text evidence="1">Belongs to the universal ribosomal protein uS3 family.</text>
</comment>
<reference key="1">
    <citation type="journal article" date="2010" name="J. Bacteriol.">
        <title>Complete genome sequence of the aerobic facultative methanotroph Methylocella silvestris BL2.</title>
        <authorList>
            <person name="Chen Y."/>
            <person name="Crombie A."/>
            <person name="Rahman M.T."/>
            <person name="Dedysh S.N."/>
            <person name="Liesack W."/>
            <person name="Stott M.B."/>
            <person name="Alam M."/>
            <person name="Theisen A.R."/>
            <person name="Murrell J.C."/>
            <person name="Dunfield P.F."/>
        </authorList>
    </citation>
    <scope>NUCLEOTIDE SEQUENCE [LARGE SCALE GENOMIC DNA]</scope>
    <source>
        <strain>DSM 15510 / CIP 108128 / LMG 27833 / NCIMB 13906 / BL2</strain>
    </source>
</reference>
<gene>
    <name evidence="1" type="primary">rpsC</name>
    <name type="ordered locus">Msil_0574</name>
</gene>